<protein>
    <recommendedName>
        <fullName evidence="5">Validamine 7-phosphate valienyltransferase</fullName>
        <ecNumber evidence="2">2.5.1.135</ecNumber>
    </recommendedName>
    <alternativeName>
        <fullName evidence="5">Pseudoglycosyltransferase</fullName>
    </alternativeName>
    <alternativeName>
        <fullName evidence="5">Trehalose 6-phosphate synthase-like enzyme VldE</fullName>
    </alternativeName>
</protein>
<keyword id="KW-0002">3D-structure</keyword>
<keyword id="KW-0045">Antibiotic biosynthesis</keyword>
<keyword id="KW-0808">Transferase</keyword>
<sequence length="497" mass="54943">MTGSEIFLASKRAAITYDTDPATGEPRAWLAPGGTGNVVAEQAGVLNISWIASADSEDDRRASALNPDGVTMELHSGREILVRLIRHDPAVFRNVQNFMTANLMWAANNYGWDRWTQPSFGSDAREGWADFGRFTRDFADAILKSSAQSADPVYLVHDYQLVGVPALLREQRPDAPILLFVHIPWPSADYWRILPKEIRTGILHGMLPATTIGFFADRWCRNFLESVADLLPDARIDREAMTVEWRGHRTRLRTMPLGYSPLTLDGRNPQLPEGIEEWADGHRLVVHSGRTDPIKNAERAVRAFVLAARGGGLEKTRMLVRMNPNRLYVPANADYVHRVETAVAEANAELGSDTVRIDNDNDVNHTIACFRRADLLIFNSTVDGQNLSTFEAPLVNERDADVILSETCGAAEVLGEYCRSVNPFDLVEQAEAISAALAAGPRQRAEAAARRRDAARPWTLEAWVQAQLDGLAADHAARTATAERFDTAPAVSTRADL</sequence>
<proteinExistence type="evidence at protein level"/>
<name>VLDE_STRHL</name>
<accession>Q15JG1</accession>
<evidence type="ECO:0000269" key="1">
    <source>
    </source>
</evidence>
<evidence type="ECO:0000269" key="2">
    <source>
    </source>
</evidence>
<evidence type="ECO:0000269" key="3">
    <source>
    </source>
</evidence>
<evidence type="ECO:0000303" key="4">
    <source>
    </source>
</evidence>
<evidence type="ECO:0000303" key="5">
    <source>
    </source>
</evidence>
<evidence type="ECO:0000305" key="6"/>
<evidence type="ECO:0000305" key="7">
    <source>
    </source>
</evidence>
<evidence type="ECO:0000312" key="8">
    <source>
        <dbReference type="EMBL" id="ABC67269.1"/>
    </source>
</evidence>
<evidence type="ECO:0000312" key="9">
    <source>
        <dbReference type="EMBL" id="ALO98983.1"/>
    </source>
</evidence>
<evidence type="ECO:0007744" key="10">
    <source>
        <dbReference type="PDB" id="4F96"/>
    </source>
</evidence>
<evidence type="ECO:0007744" key="11">
    <source>
        <dbReference type="PDB" id="4F97"/>
    </source>
</evidence>
<evidence type="ECO:0007744" key="12">
    <source>
        <dbReference type="PDB" id="4F9F"/>
    </source>
</evidence>
<evidence type="ECO:0007829" key="13">
    <source>
        <dbReference type="PDB" id="3VDM"/>
    </source>
</evidence>
<evidence type="ECO:0007829" key="14">
    <source>
        <dbReference type="PDB" id="3VDN"/>
    </source>
</evidence>
<evidence type="ECO:0007829" key="15">
    <source>
        <dbReference type="PDB" id="4F97"/>
    </source>
</evidence>
<gene>
    <name evidence="4" type="primary">vldE</name>
    <name evidence="9" type="ORF">SHL15_8006</name>
</gene>
<organism>
    <name type="scientific">Streptomyces hygroscopicus subsp. limoneus</name>
    <dbReference type="NCBI Taxonomy" id="264445"/>
    <lineage>
        <taxon>Bacteria</taxon>
        <taxon>Bacillati</taxon>
        <taxon>Actinomycetota</taxon>
        <taxon>Actinomycetes</taxon>
        <taxon>Kitasatosporales</taxon>
        <taxon>Streptomycetaceae</taxon>
        <taxon>Streptomyces</taxon>
        <taxon>Streptomyces violaceusniger group</taxon>
    </lineage>
</organism>
<feature type="chain" id="PRO_0000442846" description="Validamine 7-phosphate valienyltransferase">
    <location>
        <begin position="1"/>
        <end position="497"/>
    </location>
</feature>
<feature type="binding site" evidence="7 11">
    <location>
        <position position="158"/>
    </location>
    <ligand>
        <name>GDP-valienol</name>
        <dbReference type="ChEBI" id="CHEBI:91253"/>
    </ligand>
</feature>
<feature type="binding site" evidence="7 11">
    <location>
        <position position="182"/>
    </location>
    <ligand>
        <name>validamine 7-phosphate</name>
        <dbReference type="ChEBI" id="CHEBI:111503"/>
    </ligand>
</feature>
<feature type="binding site" evidence="7 10 11 12">
    <location>
        <position position="290"/>
    </location>
    <ligand>
        <name>GDP-valienol</name>
        <dbReference type="ChEBI" id="CHEBI:91253"/>
    </ligand>
</feature>
<feature type="binding site" evidence="7 10 11 12">
    <location>
        <position position="295"/>
    </location>
    <ligand>
        <name>GDP-valienol</name>
        <dbReference type="ChEBI" id="CHEBI:91253"/>
    </ligand>
</feature>
<feature type="binding site" evidence="7 11 12">
    <location>
        <position position="321"/>
    </location>
    <ligand>
        <name>GDP-valienol</name>
        <dbReference type="ChEBI" id="CHEBI:91253"/>
    </ligand>
</feature>
<feature type="binding site" evidence="7 11">
    <location>
        <begin position="325"/>
        <end position="326"/>
    </location>
    <ligand>
        <name>GDP-valienol</name>
        <dbReference type="ChEBI" id="CHEBI:91253"/>
    </ligand>
</feature>
<feature type="binding site" evidence="7 10 11 12">
    <location>
        <begin position="361"/>
        <end position="362"/>
    </location>
    <ligand>
        <name>GDP-valienol</name>
        <dbReference type="ChEBI" id="CHEBI:91253"/>
    </ligand>
</feature>
<feature type="binding site" evidence="7 10 11 12">
    <location>
        <position position="366"/>
    </location>
    <ligand>
        <name>GDP-valienol</name>
        <dbReference type="ChEBI" id="CHEBI:91253"/>
    </ligand>
</feature>
<feature type="binding site" evidence="7 11 12">
    <location>
        <begin position="383"/>
        <end position="386"/>
    </location>
    <ligand>
        <name>validamine 7-phosphate</name>
        <dbReference type="ChEBI" id="CHEBI:111503"/>
    </ligand>
</feature>
<feature type="binding site" evidence="7 10 11 12">
    <location>
        <begin position="387"/>
        <end position="388"/>
    </location>
    <ligand>
        <name>GDP-valienol</name>
        <dbReference type="ChEBI" id="CHEBI:91253"/>
    </ligand>
</feature>
<feature type="binding site" evidence="7 10 11 12">
    <location>
        <position position="391"/>
    </location>
    <ligand>
        <name>GDP-valienol</name>
        <dbReference type="ChEBI" id="CHEBI:91253"/>
    </ligand>
</feature>
<feature type="strand" evidence="13">
    <location>
        <begin position="4"/>
        <end position="9"/>
    </location>
</feature>
<feature type="strand" evidence="13">
    <location>
        <begin position="15"/>
        <end position="19"/>
    </location>
</feature>
<feature type="turn" evidence="13">
    <location>
        <begin position="21"/>
        <end position="23"/>
    </location>
</feature>
<feature type="strand" evidence="13">
    <location>
        <begin position="26"/>
        <end position="30"/>
    </location>
</feature>
<feature type="helix" evidence="13">
    <location>
        <begin position="35"/>
        <end position="40"/>
    </location>
</feature>
<feature type="strand" evidence="14">
    <location>
        <begin position="42"/>
        <end position="44"/>
    </location>
</feature>
<feature type="strand" evidence="13">
    <location>
        <begin position="45"/>
        <end position="53"/>
    </location>
</feature>
<feature type="helix" evidence="13">
    <location>
        <begin position="57"/>
        <end position="65"/>
    </location>
</feature>
<feature type="strand" evidence="13">
    <location>
        <begin position="70"/>
        <end position="73"/>
    </location>
</feature>
<feature type="helix" evidence="15">
    <location>
        <begin position="75"/>
        <end position="77"/>
    </location>
</feature>
<feature type="strand" evidence="13">
    <location>
        <begin position="79"/>
        <end position="85"/>
    </location>
</feature>
<feature type="helix" evidence="13">
    <location>
        <begin position="89"/>
        <end position="98"/>
    </location>
</feature>
<feature type="turn" evidence="13">
    <location>
        <begin position="101"/>
        <end position="103"/>
    </location>
</feature>
<feature type="helix" evidence="13">
    <location>
        <begin position="104"/>
        <end position="108"/>
    </location>
</feature>
<feature type="strand" evidence="13">
    <location>
        <begin position="114"/>
        <end position="116"/>
    </location>
</feature>
<feature type="helix" evidence="13">
    <location>
        <begin position="122"/>
        <end position="145"/>
    </location>
</feature>
<feature type="turn" evidence="13">
    <location>
        <begin position="146"/>
        <end position="148"/>
    </location>
</feature>
<feature type="strand" evidence="13">
    <location>
        <begin position="150"/>
        <end position="158"/>
    </location>
</feature>
<feature type="helix" evidence="13">
    <location>
        <begin position="159"/>
        <end position="161"/>
    </location>
</feature>
<feature type="helix" evidence="13">
    <location>
        <begin position="164"/>
        <end position="171"/>
    </location>
</feature>
<feature type="strand" evidence="14">
    <location>
        <begin position="173"/>
        <end position="175"/>
    </location>
</feature>
<feature type="strand" evidence="13">
    <location>
        <begin position="177"/>
        <end position="181"/>
    </location>
</feature>
<feature type="helix" evidence="13">
    <location>
        <begin position="188"/>
        <end position="191"/>
    </location>
</feature>
<feature type="helix" evidence="13">
    <location>
        <begin position="196"/>
        <end position="206"/>
    </location>
</feature>
<feature type="strand" evidence="13">
    <location>
        <begin position="209"/>
        <end position="216"/>
    </location>
</feature>
<feature type="helix" evidence="13">
    <location>
        <begin position="217"/>
        <end position="230"/>
    </location>
</feature>
<feature type="strand" evidence="13">
    <location>
        <begin position="235"/>
        <end position="237"/>
    </location>
</feature>
<feature type="turn" evidence="13">
    <location>
        <begin position="238"/>
        <end position="241"/>
    </location>
</feature>
<feature type="strand" evidence="13">
    <location>
        <begin position="242"/>
        <end position="245"/>
    </location>
</feature>
<feature type="strand" evidence="13">
    <location>
        <begin position="248"/>
        <end position="254"/>
    </location>
</feature>
<feature type="helix" evidence="13">
    <location>
        <begin position="261"/>
        <end position="264"/>
    </location>
</feature>
<feature type="helix" evidence="13">
    <location>
        <begin position="275"/>
        <end position="279"/>
    </location>
</feature>
<feature type="strand" evidence="13">
    <location>
        <begin position="282"/>
        <end position="292"/>
    </location>
</feature>
<feature type="helix" evidence="13">
    <location>
        <begin position="293"/>
        <end position="295"/>
    </location>
</feature>
<feature type="helix" evidence="13">
    <location>
        <begin position="297"/>
        <end position="309"/>
    </location>
</feature>
<feature type="strand" evidence="13">
    <location>
        <begin position="316"/>
        <end position="323"/>
    </location>
</feature>
<feature type="helix" evidence="13">
    <location>
        <begin position="330"/>
        <end position="350"/>
    </location>
</feature>
<feature type="strand" evidence="13">
    <location>
        <begin position="354"/>
        <end position="359"/>
    </location>
</feature>
<feature type="helix" evidence="13">
    <location>
        <begin position="363"/>
        <end position="372"/>
    </location>
</feature>
<feature type="strand" evidence="13">
    <location>
        <begin position="374"/>
        <end position="378"/>
    </location>
</feature>
<feature type="strand" evidence="15">
    <location>
        <begin position="381"/>
        <end position="384"/>
    </location>
</feature>
<feature type="helix" evidence="13">
    <location>
        <begin position="388"/>
        <end position="395"/>
    </location>
</feature>
<feature type="strand" evidence="13">
    <location>
        <begin position="401"/>
        <end position="405"/>
    </location>
</feature>
<feature type="helix" evidence="13">
    <location>
        <begin position="411"/>
        <end position="414"/>
    </location>
</feature>
<feature type="helix" evidence="13">
    <location>
        <begin position="415"/>
        <end position="417"/>
    </location>
</feature>
<feature type="strand" evidence="13">
    <location>
        <begin position="418"/>
        <end position="421"/>
    </location>
</feature>
<feature type="helix" evidence="13">
    <location>
        <begin position="426"/>
        <end position="438"/>
    </location>
</feature>
<feature type="helix" evidence="13">
    <location>
        <begin position="441"/>
        <end position="455"/>
    </location>
</feature>
<feature type="helix" evidence="13">
    <location>
        <begin position="460"/>
        <end position="480"/>
    </location>
</feature>
<dbReference type="EC" id="2.5.1.135" evidence="2"/>
<dbReference type="EMBL" id="DQ223652">
    <property type="protein sequence ID" value="ABC67269.1"/>
    <property type="molecule type" value="Genomic_DNA"/>
</dbReference>
<dbReference type="EMBL" id="CP013220">
    <property type="protein sequence ID" value="ALO98983.1"/>
    <property type="molecule type" value="Genomic_DNA"/>
</dbReference>
<dbReference type="PDB" id="3VDM">
    <property type="method" value="X-ray"/>
    <property type="resolution" value="1.98 A"/>
    <property type="chains" value="A/B=1-497"/>
</dbReference>
<dbReference type="PDB" id="3VDN">
    <property type="method" value="X-ray"/>
    <property type="resolution" value="2.55 A"/>
    <property type="chains" value="B=1-497"/>
</dbReference>
<dbReference type="PDB" id="4F96">
    <property type="method" value="X-ray"/>
    <property type="resolution" value="2.15 A"/>
    <property type="chains" value="A/B=1-497"/>
</dbReference>
<dbReference type="PDB" id="4F97">
    <property type="method" value="X-ray"/>
    <property type="resolution" value="2.11 A"/>
    <property type="chains" value="A/B=1-497"/>
</dbReference>
<dbReference type="PDB" id="4F9F">
    <property type="method" value="X-ray"/>
    <property type="resolution" value="2.81 A"/>
    <property type="chains" value="A/B/C/D/E/F=1-497"/>
</dbReference>
<dbReference type="PDB" id="8IYE">
    <property type="method" value="X-ray"/>
    <property type="resolution" value="1.90 A"/>
    <property type="chains" value="A/B=1-497"/>
</dbReference>
<dbReference type="PDB" id="8IYF">
    <property type="method" value="X-ray"/>
    <property type="resolution" value="1.90 A"/>
    <property type="chains" value="A/B=1-497"/>
</dbReference>
<dbReference type="PDBsum" id="3VDM"/>
<dbReference type="PDBsum" id="3VDN"/>
<dbReference type="PDBsum" id="4F96"/>
<dbReference type="PDBsum" id="4F97"/>
<dbReference type="PDBsum" id="4F9F"/>
<dbReference type="PDBsum" id="8IYE"/>
<dbReference type="PDBsum" id="8IYF"/>
<dbReference type="SMR" id="Q15JG1"/>
<dbReference type="CAZy" id="GT20">
    <property type="family name" value="Glycosyltransferase Family 20"/>
</dbReference>
<dbReference type="PATRIC" id="fig|264445.3.peg.8517"/>
<dbReference type="BioCyc" id="MetaCyc:MONOMER-13774"/>
<dbReference type="BRENDA" id="2.4.1.338">
    <property type="organism ID" value="6043"/>
</dbReference>
<dbReference type="BRENDA" id="2.5.1.135">
    <property type="organism ID" value="14504"/>
</dbReference>
<dbReference type="EvolutionaryTrace" id="Q15JG1"/>
<dbReference type="GO" id="GO:0003825">
    <property type="term" value="F:alpha,alpha-trehalose-phosphate synthase (UDP-forming) activity"/>
    <property type="evidence" value="ECO:0007669"/>
    <property type="project" value="TreeGrafter"/>
</dbReference>
<dbReference type="GO" id="GO:0017000">
    <property type="term" value="P:antibiotic biosynthetic process"/>
    <property type="evidence" value="ECO:0007669"/>
    <property type="project" value="UniProtKB-KW"/>
</dbReference>
<dbReference type="GO" id="GO:0005992">
    <property type="term" value="P:trehalose biosynthetic process"/>
    <property type="evidence" value="ECO:0007669"/>
    <property type="project" value="InterPro"/>
</dbReference>
<dbReference type="Gene3D" id="3.40.50.2000">
    <property type="entry name" value="Glycogen Phosphorylase B"/>
    <property type="match status" value="2"/>
</dbReference>
<dbReference type="InterPro" id="IPR001830">
    <property type="entry name" value="Glyco_trans_20"/>
</dbReference>
<dbReference type="PANTHER" id="PTHR10788:SF106">
    <property type="entry name" value="BCDNA.GH08860"/>
    <property type="match status" value="1"/>
</dbReference>
<dbReference type="PANTHER" id="PTHR10788">
    <property type="entry name" value="TREHALOSE-6-PHOSPHATE SYNTHASE"/>
    <property type="match status" value="1"/>
</dbReference>
<dbReference type="Pfam" id="PF00982">
    <property type="entry name" value="Glyco_transf_20"/>
    <property type="match status" value="1"/>
</dbReference>
<dbReference type="SUPFAM" id="SSF53756">
    <property type="entry name" value="UDP-Glycosyltransferase/glycogen phosphorylase"/>
    <property type="match status" value="1"/>
</dbReference>
<reference key="1">
    <citation type="journal article" date="2006" name="Gene">
        <title>Genetic localization and heterologous expression of validamycin biosynthetic gene cluster isolated from Streptomyces hygroscopicus var. limoneus KCCM 11405 (IFO 12704).</title>
        <authorList>
            <person name="Singh D."/>
            <person name="Seo M.J."/>
            <person name="Kwon H.J."/>
            <person name="Rajkarnikar A."/>
            <person name="Kim K.R."/>
            <person name="Kim S.O."/>
            <person name="Suh J.W."/>
        </authorList>
    </citation>
    <scope>NUCLEOTIDE SEQUENCE [GENOMIC DNA]</scope>
    <scope>FUNCTION</scope>
    <source>
        <strain evidence="8">ATCC 21432 / NBRC 12704 / KCTC 1717 / KCCM 11405</strain>
    </source>
</reference>
<reference key="2">
    <citation type="submission" date="2015-11" db="EMBL/GenBank/DDBJ databases">
        <authorList>
            <person name="Kim K.M."/>
        </authorList>
    </citation>
    <scope>NUCLEOTIDE SEQUENCE [LARGE SCALE GENOMIC DNA]</scope>
    <source>
        <strain>ATCC 21432 / NBRC 12704 / KCTC 1717 / KCCM 11405</strain>
    </source>
</reference>
<reference key="3">
    <citation type="journal article" date="2011" name="J. Am. Chem. Soc.">
        <title>Pseudoglycosyltransferase catalyzes nonglycosidic C-N coupling in validamycin a biosynthesis.</title>
        <authorList>
            <person name="Asamizu S."/>
            <person name="Yang J."/>
            <person name="Almabruk K.H."/>
            <person name="Mahmud T."/>
        </authorList>
    </citation>
    <scope>FUNCTION</scope>
    <scope>CATALYTIC ACTIVITY</scope>
    <scope>BIOPHYSICOCHEMICAL PROPERTIES</scope>
    <source>
        <strain>ATCC 21432 / NBRC 12704 / KCTC 1717 / KCCM 11405</strain>
    </source>
</reference>
<reference key="4">
    <citation type="journal article" date="2012" name="PLoS ONE">
        <title>Mechanistic insights into validoxylamine A 7'-phosphate synthesis by VldE using the structure of the entire product complex.</title>
        <authorList>
            <person name="Cavalier M.C."/>
            <person name="Yim Y.S."/>
            <person name="Asamizu S."/>
            <person name="Neau D."/>
            <person name="Almabruk K.H."/>
            <person name="Mahmud T."/>
            <person name="Lee Y.H."/>
        </authorList>
    </citation>
    <scope>X-RAY CRYSTALLOGRAPHY (1.98 ANGSTROMS) IN COMPLEX WITH SUBSTRATE ANALOGS</scope>
    <scope>REACTION MECHANISM</scope>
    <scope>SUBUNIT</scope>
    <source>
        <strain>ATCC 21432 / NBRC 12704 / KCTC 1717 / KCCM 11405</strain>
    </source>
</reference>
<comment type="function">
    <text evidence="1 2">Involved in the biosynthesis of the antifungal agent validamycin A (PubMed:16725283). Catalyzes the condensation between GDP-valienol and validamine 7-phosphate via a nonglycosidic C-N bond formation to yield validoxylamine A 7'-phosphate (PubMed:21766819).</text>
</comment>
<comment type="catalytic activity">
    <reaction evidence="2">
        <text>validamine 7-phosphate + GDP-valienol = validoxylamine A 7'-phosphate + GDP + H(+)</text>
        <dbReference type="Rhea" id="RHEA:32119"/>
        <dbReference type="ChEBI" id="CHEBI:15378"/>
        <dbReference type="ChEBI" id="CHEBI:58189"/>
        <dbReference type="ChEBI" id="CHEBI:91253"/>
        <dbReference type="ChEBI" id="CHEBI:111503"/>
        <dbReference type="ChEBI" id="CHEBI:111504"/>
        <dbReference type="EC" id="2.5.1.135"/>
    </reaction>
</comment>
<comment type="biophysicochemical properties">
    <kinetics>
        <KM evidence="2">59.7 uM for GDP-valienol</KM>
        <KM evidence="2">308 uM for validamine 7-phosphate</KM>
        <text evidence="2">kcat is 7 min(-1) with GDP-valienol as substrate. kcat is 7 min(-1) with validamine 7-phosphate as substrate.</text>
    </kinetics>
</comment>
<comment type="subunit">
    <text evidence="3">Homodimer.</text>
</comment>
<comment type="similarity">
    <text evidence="6">Belongs to the glycosyltransferase 20 family.</text>
</comment>